<proteinExistence type="inferred from homology"/>
<sequence>MNKKYDAIVIGGGHAGLEAAFAISHKGRNTLLLTFNSKKLGMMPCNPSIGGPAKGIITREIDALGGMQGLWADLATIQLKMLNLSKGPAVRALRAQIDKEKYSQLAYEYVLKQPNLELLEGVAEEVIVDENGYFKGVLVENIGLIEAKVCVITTGTYMNSRILRGQDITTSGPDNEKTTPKLSASLAKLGFTLQRLKTGTPPRIYSDSINFDEVEQEVLSDVNISFSSRSNLKKPKQIACYLTYTTPETHRIIEENIHRSPMYSGVIEGIGPRYCPSVEDKIVKFPDKERHQIFFEPETADGAITHVNGLSTSMPIDVQELMIKSIPGLRNAKVQKWAYAIEYDALDPLQLKESLETKLVHNLFTAGQINGTSGYEEAAAQGLIAGINAALKLEDKDPIVILRNHGYIGVLIDDLVTKGTKEPYRMLTSRAEYRLLLRNDNADDRLSEYAYNSGMISKEEYQKVLDKYKLIDDEIQRLNTTYLSGKSDVALKYNITNGSTLLNVISRPDVDPSDIIPNFPYLEEITTMVRLHGYIEKQKSDANKAVRLENLKIPEDLNYLDVKNIAIEARQKFEKIRPATIGQASRISGINPADIQMLMFHLESRNKKNYDQN</sequence>
<dbReference type="EMBL" id="CU179680">
    <property type="protein sequence ID" value="CAL58872.1"/>
    <property type="molecule type" value="Genomic_DNA"/>
</dbReference>
<dbReference type="RefSeq" id="WP_011949354.1">
    <property type="nucleotide sequence ID" value="NC_009497.1"/>
</dbReference>
<dbReference type="SMR" id="A5IXW3"/>
<dbReference type="STRING" id="347257.MAG1740"/>
<dbReference type="GeneID" id="93357933"/>
<dbReference type="KEGG" id="maa:MAG1740"/>
<dbReference type="HOGENOM" id="CLU_007831_2_2_14"/>
<dbReference type="Proteomes" id="UP000007065">
    <property type="component" value="Chromosome"/>
</dbReference>
<dbReference type="GO" id="GO:0005829">
    <property type="term" value="C:cytosol"/>
    <property type="evidence" value="ECO:0007669"/>
    <property type="project" value="TreeGrafter"/>
</dbReference>
<dbReference type="GO" id="GO:0050660">
    <property type="term" value="F:flavin adenine dinucleotide binding"/>
    <property type="evidence" value="ECO:0007669"/>
    <property type="project" value="UniProtKB-UniRule"/>
</dbReference>
<dbReference type="GO" id="GO:0030488">
    <property type="term" value="P:tRNA methylation"/>
    <property type="evidence" value="ECO:0007669"/>
    <property type="project" value="TreeGrafter"/>
</dbReference>
<dbReference type="GO" id="GO:0002098">
    <property type="term" value="P:tRNA wobble uridine modification"/>
    <property type="evidence" value="ECO:0007669"/>
    <property type="project" value="InterPro"/>
</dbReference>
<dbReference type="FunFam" id="1.10.150.570:FF:000001">
    <property type="entry name" value="tRNA uridine 5-carboxymethylaminomethyl modification enzyme MnmG"/>
    <property type="match status" value="1"/>
</dbReference>
<dbReference type="FunFam" id="3.50.50.60:FF:000002">
    <property type="entry name" value="tRNA uridine 5-carboxymethylaminomethyl modification enzyme MnmG"/>
    <property type="match status" value="1"/>
</dbReference>
<dbReference type="Gene3D" id="3.50.50.60">
    <property type="entry name" value="FAD/NAD(P)-binding domain"/>
    <property type="match status" value="2"/>
</dbReference>
<dbReference type="Gene3D" id="1.10.150.570">
    <property type="entry name" value="GidA associated domain, C-terminal subdomain"/>
    <property type="match status" value="1"/>
</dbReference>
<dbReference type="HAMAP" id="MF_00129">
    <property type="entry name" value="MnmG_GidA"/>
    <property type="match status" value="1"/>
</dbReference>
<dbReference type="InterPro" id="IPR036188">
    <property type="entry name" value="FAD/NAD-bd_sf"/>
</dbReference>
<dbReference type="InterPro" id="IPR049312">
    <property type="entry name" value="GIDA_C_N"/>
</dbReference>
<dbReference type="InterPro" id="IPR004416">
    <property type="entry name" value="MnmG"/>
</dbReference>
<dbReference type="InterPro" id="IPR002218">
    <property type="entry name" value="MnmG-rel"/>
</dbReference>
<dbReference type="InterPro" id="IPR020595">
    <property type="entry name" value="MnmG-rel_CS"/>
</dbReference>
<dbReference type="InterPro" id="IPR026904">
    <property type="entry name" value="MnmG_C"/>
</dbReference>
<dbReference type="InterPro" id="IPR047001">
    <property type="entry name" value="MnmG_C_subdom"/>
</dbReference>
<dbReference type="InterPro" id="IPR044920">
    <property type="entry name" value="MnmG_C_subdom_sf"/>
</dbReference>
<dbReference type="InterPro" id="IPR040131">
    <property type="entry name" value="MnmG_N"/>
</dbReference>
<dbReference type="NCBIfam" id="TIGR00136">
    <property type="entry name" value="mnmG_gidA"/>
    <property type="match status" value="1"/>
</dbReference>
<dbReference type="PANTHER" id="PTHR11806">
    <property type="entry name" value="GLUCOSE INHIBITED DIVISION PROTEIN A"/>
    <property type="match status" value="1"/>
</dbReference>
<dbReference type="PANTHER" id="PTHR11806:SF0">
    <property type="entry name" value="PROTEIN MTO1 HOMOLOG, MITOCHONDRIAL"/>
    <property type="match status" value="1"/>
</dbReference>
<dbReference type="Pfam" id="PF01134">
    <property type="entry name" value="GIDA"/>
    <property type="match status" value="1"/>
</dbReference>
<dbReference type="Pfam" id="PF21680">
    <property type="entry name" value="GIDA_C_1st"/>
    <property type="match status" value="1"/>
</dbReference>
<dbReference type="Pfam" id="PF13932">
    <property type="entry name" value="SAM_GIDA_C"/>
    <property type="match status" value="1"/>
</dbReference>
<dbReference type="SMART" id="SM01228">
    <property type="entry name" value="GIDA_assoc_3"/>
    <property type="match status" value="1"/>
</dbReference>
<dbReference type="SUPFAM" id="SSF51905">
    <property type="entry name" value="FAD/NAD(P)-binding domain"/>
    <property type="match status" value="1"/>
</dbReference>
<dbReference type="PROSITE" id="PS01280">
    <property type="entry name" value="GIDA_1"/>
    <property type="match status" value="1"/>
</dbReference>
<dbReference type="PROSITE" id="PS01281">
    <property type="entry name" value="GIDA_2"/>
    <property type="match status" value="1"/>
</dbReference>
<evidence type="ECO:0000255" key="1">
    <source>
        <dbReference type="HAMAP-Rule" id="MF_00129"/>
    </source>
</evidence>
<keyword id="KW-0963">Cytoplasm</keyword>
<keyword id="KW-0274">FAD</keyword>
<keyword id="KW-0285">Flavoprotein</keyword>
<keyword id="KW-0520">NAD</keyword>
<keyword id="KW-1185">Reference proteome</keyword>
<keyword id="KW-0819">tRNA processing</keyword>
<organism>
    <name type="scientific">Mycoplasmopsis agalactiae (strain NCTC 10123 / CIP 59.7 / PG2)</name>
    <name type="common">Mycoplasma agalactiae</name>
    <dbReference type="NCBI Taxonomy" id="347257"/>
    <lineage>
        <taxon>Bacteria</taxon>
        <taxon>Bacillati</taxon>
        <taxon>Mycoplasmatota</taxon>
        <taxon>Mycoplasmoidales</taxon>
        <taxon>Metamycoplasmataceae</taxon>
        <taxon>Mycoplasmopsis</taxon>
    </lineage>
</organism>
<protein>
    <recommendedName>
        <fullName evidence="1">tRNA uridine 5-carboxymethylaminomethyl modification enzyme MnmG</fullName>
    </recommendedName>
    <alternativeName>
        <fullName evidence="1">Glucose-inhibited division protein A</fullName>
    </alternativeName>
</protein>
<name>MNMG_MYCAP</name>
<feature type="chain" id="PRO_0000345302" description="tRNA uridine 5-carboxymethylaminomethyl modification enzyme MnmG">
    <location>
        <begin position="1"/>
        <end position="613"/>
    </location>
</feature>
<feature type="binding site" evidence="1">
    <location>
        <begin position="11"/>
        <end position="16"/>
    </location>
    <ligand>
        <name>FAD</name>
        <dbReference type="ChEBI" id="CHEBI:57692"/>
    </ligand>
</feature>
<feature type="binding site" evidence="1">
    <location>
        <begin position="271"/>
        <end position="285"/>
    </location>
    <ligand>
        <name>NAD(+)</name>
        <dbReference type="ChEBI" id="CHEBI:57540"/>
    </ligand>
</feature>
<gene>
    <name evidence="1" type="primary">mnmG</name>
    <name evidence="1" type="synonym">gidA</name>
    <name type="ordered locus">MAG1740</name>
</gene>
<accession>A5IXW3</accession>
<comment type="function">
    <text evidence="1">NAD-binding protein involved in the addition of a carboxymethylaminomethyl (cmnm) group at the wobble position (U34) of certain tRNAs, forming tRNA-cmnm(5)s(2)U34.</text>
</comment>
<comment type="cofactor">
    <cofactor evidence="1">
        <name>FAD</name>
        <dbReference type="ChEBI" id="CHEBI:57692"/>
    </cofactor>
</comment>
<comment type="subunit">
    <text evidence="1">Homodimer. Heterotetramer of two MnmE and two MnmG subunits.</text>
</comment>
<comment type="subcellular location">
    <subcellularLocation>
        <location evidence="1">Cytoplasm</location>
    </subcellularLocation>
</comment>
<comment type="similarity">
    <text evidence="1">Belongs to the MnmG family.</text>
</comment>
<reference key="1">
    <citation type="journal article" date="2007" name="PLoS Genet.">
        <title>Being pathogenic, plastic, and sexual while living with a nearly minimal bacterial genome.</title>
        <authorList>
            <person name="Sirand-Pugnet P."/>
            <person name="Lartigue C."/>
            <person name="Marenda M."/>
            <person name="Jacob D."/>
            <person name="Barre A."/>
            <person name="Barbe V."/>
            <person name="Schenowitz C."/>
            <person name="Mangenot S."/>
            <person name="Couloux A."/>
            <person name="Segurens B."/>
            <person name="de Daruvar A."/>
            <person name="Blanchard A."/>
            <person name="Citti C."/>
        </authorList>
    </citation>
    <scope>NUCLEOTIDE SEQUENCE [LARGE SCALE GENOMIC DNA]</scope>
    <source>
        <strain>NCTC 10123 / CIP 59.7 / PG2</strain>
    </source>
</reference>